<gene>
    <name type="primary">Cd302</name>
    <name type="synonym">Clec13a</name>
</gene>
<name>CD302_MOUSE</name>
<comment type="function">
    <text evidence="1">Potential multifunctional C-type lectin receptor that may play roles in endocytosis and phagocytosis as well as in cell adhesion and migration.</text>
</comment>
<comment type="subcellular location">
    <subcellularLocation>
        <location evidence="5">Membrane</location>
        <topology evidence="5">Single-pass type I membrane protein</topology>
    </subcellularLocation>
    <subcellularLocation>
        <location evidence="1">Cell projection</location>
        <location evidence="1">Filopodium</location>
    </subcellularLocation>
    <subcellularLocation>
        <location evidence="1">Cytoplasm</location>
        <location evidence="1">Cell cortex</location>
    </subcellularLocation>
    <subcellularLocation>
        <location evidence="1">Cell projection</location>
        <location evidence="1">Microvillus</location>
    </subcellularLocation>
    <text evidence="1">Colocalizes with F-actin in filopodia, cellular cortex and microvilli of the apical cell surface.</text>
</comment>
<comment type="alternative products">
    <event type="alternative splicing"/>
    <isoform>
        <id>Q9DCG2-1</id>
        <name>1</name>
        <sequence type="displayed"/>
    </isoform>
    <isoform>
        <id>Q9DCG2-2</id>
        <name>2</name>
        <sequence type="described" ref="VSP_020910"/>
    </isoform>
</comment>
<feature type="signal peptide" evidence="2">
    <location>
        <begin position="1"/>
        <end position="20"/>
    </location>
</feature>
<feature type="chain" id="PRO_0000252333" description="CD302 antigen">
    <location>
        <begin position="21"/>
        <end position="228"/>
    </location>
</feature>
<feature type="topological domain" description="Extracellular" evidence="2">
    <location>
        <begin position="21"/>
        <end position="165"/>
    </location>
</feature>
<feature type="transmembrane region" description="Helical" evidence="2">
    <location>
        <begin position="166"/>
        <end position="186"/>
    </location>
</feature>
<feature type="topological domain" description="Cytoplasmic" evidence="2">
    <location>
        <begin position="187"/>
        <end position="228"/>
    </location>
</feature>
<feature type="domain" description="C-type lectin" evidence="3">
    <location>
        <begin position="30"/>
        <end position="149"/>
    </location>
</feature>
<feature type="glycosylation site" description="N-linked (GlcNAc...) asparagine" evidence="2">
    <location>
        <position position="107"/>
    </location>
</feature>
<feature type="disulfide bond" evidence="3">
    <location>
        <begin position="125"/>
        <end position="140"/>
    </location>
</feature>
<feature type="splice variant" id="VSP_020910" description="In isoform 2." evidence="4">
    <original>IPYDKKYLSD</original>
    <variation>N</variation>
    <location>
        <begin position="154"/>
        <end position="163"/>
    </location>
</feature>
<proteinExistence type="evidence at protein level"/>
<evidence type="ECO:0000250" key="1"/>
<evidence type="ECO:0000255" key="2"/>
<evidence type="ECO:0000255" key="3">
    <source>
        <dbReference type="PROSITE-ProRule" id="PRU00040"/>
    </source>
</evidence>
<evidence type="ECO:0000303" key="4">
    <source>
    </source>
</evidence>
<evidence type="ECO:0000305" key="5"/>
<accession>Q9DCG2</accession>
<accession>A2AW84</accession>
<accession>A2AW85</accession>
<accession>Q78KD8</accession>
<accession>Q9D0X7</accession>
<organism>
    <name type="scientific">Mus musculus</name>
    <name type="common">Mouse</name>
    <dbReference type="NCBI Taxonomy" id="10090"/>
    <lineage>
        <taxon>Eukaryota</taxon>
        <taxon>Metazoa</taxon>
        <taxon>Chordata</taxon>
        <taxon>Craniata</taxon>
        <taxon>Vertebrata</taxon>
        <taxon>Euteleostomi</taxon>
        <taxon>Mammalia</taxon>
        <taxon>Eutheria</taxon>
        <taxon>Euarchontoglires</taxon>
        <taxon>Glires</taxon>
        <taxon>Rodentia</taxon>
        <taxon>Myomorpha</taxon>
        <taxon>Muroidea</taxon>
        <taxon>Muridae</taxon>
        <taxon>Murinae</taxon>
        <taxon>Mus</taxon>
        <taxon>Mus</taxon>
    </lineage>
</organism>
<reference key="1">
    <citation type="journal article" date="2005" name="Science">
        <title>The transcriptional landscape of the mammalian genome.</title>
        <authorList>
            <person name="Carninci P."/>
            <person name="Kasukawa T."/>
            <person name="Katayama S."/>
            <person name="Gough J."/>
            <person name="Frith M.C."/>
            <person name="Maeda N."/>
            <person name="Oyama R."/>
            <person name="Ravasi T."/>
            <person name="Lenhard B."/>
            <person name="Wells C."/>
            <person name="Kodzius R."/>
            <person name="Shimokawa K."/>
            <person name="Bajic V.B."/>
            <person name="Brenner S.E."/>
            <person name="Batalov S."/>
            <person name="Forrest A.R."/>
            <person name="Zavolan M."/>
            <person name="Davis M.J."/>
            <person name="Wilming L.G."/>
            <person name="Aidinis V."/>
            <person name="Allen J.E."/>
            <person name="Ambesi-Impiombato A."/>
            <person name="Apweiler R."/>
            <person name="Aturaliya R.N."/>
            <person name="Bailey T.L."/>
            <person name="Bansal M."/>
            <person name="Baxter L."/>
            <person name="Beisel K.W."/>
            <person name="Bersano T."/>
            <person name="Bono H."/>
            <person name="Chalk A.M."/>
            <person name="Chiu K.P."/>
            <person name="Choudhary V."/>
            <person name="Christoffels A."/>
            <person name="Clutterbuck D.R."/>
            <person name="Crowe M.L."/>
            <person name="Dalla E."/>
            <person name="Dalrymple B.P."/>
            <person name="de Bono B."/>
            <person name="Della Gatta G."/>
            <person name="di Bernardo D."/>
            <person name="Down T."/>
            <person name="Engstrom P."/>
            <person name="Fagiolini M."/>
            <person name="Faulkner G."/>
            <person name="Fletcher C.F."/>
            <person name="Fukushima T."/>
            <person name="Furuno M."/>
            <person name="Futaki S."/>
            <person name="Gariboldi M."/>
            <person name="Georgii-Hemming P."/>
            <person name="Gingeras T.R."/>
            <person name="Gojobori T."/>
            <person name="Green R.E."/>
            <person name="Gustincich S."/>
            <person name="Harbers M."/>
            <person name="Hayashi Y."/>
            <person name="Hensch T.K."/>
            <person name="Hirokawa N."/>
            <person name="Hill D."/>
            <person name="Huminiecki L."/>
            <person name="Iacono M."/>
            <person name="Ikeo K."/>
            <person name="Iwama A."/>
            <person name="Ishikawa T."/>
            <person name="Jakt M."/>
            <person name="Kanapin A."/>
            <person name="Katoh M."/>
            <person name="Kawasawa Y."/>
            <person name="Kelso J."/>
            <person name="Kitamura H."/>
            <person name="Kitano H."/>
            <person name="Kollias G."/>
            <person name="Krishnan S.P."/>
            <person name="Kruger A."/>
            <person name="Kummerfeld S.K."/>
            <person name="Kurochkin I.V."/>
            <person name="Lareau L.F."/>
            <person name="Lazarevic D."/>
            <person name="Lipovich L."/>
            <person name="Liu J."/>
            <person name="Liuni S."/>
            <person name="McWilliam S."/>
            <person name="Madan Babu M."/>
            <person name="Madera M."/>
            <person name="Marchionni L."/>
            <person name="Matsuda H."/>
            <person name="Matsuzawa S."/>
            <person name="Miki H."/>
            <person name="Mignone F."/>
            <person name="Miyake S."/>
            <person name="Morris K."/>
            <person name="Mottagui-Tabar S."/>
            <person name="Mulder N."/>
            <person name="Nakano N."/>
            <person name="Nakauchi H."/>
            <person name="Ng P."/>
            <person name="Nilsson R."/>
            <person name="Nishiguchi S."/>
            <person name="Nishikawa S."/>
            <person name="Nori F."/>
            <person name="Ohara O."/>
            <person name="Okazaki Y."/>
            <person name="Orlando V."/>
            <person name="Pang K.C."/>
            <person name="Pavan W.J."/>
            <person name="Pavesi G."/>
            <person name="Pesole G."/>
            <person name="Petrovsky N."/>
            <person name="Piazza S."/>
            <person name="Reed J."/>
            <person name="Reid J.F."/>
            <person name="Ring B.Z."/>
            <person name="Ringwald M."/>
            <person name="Rost B."/>
            <person name="Ruan Y."/>
            <person name="Salzberg S.L."/>
            <person name="Sandelin A."/>
            <person name="Schneider C."/>
            <person name="Schoenbach C."/>
            <person name="Sekiguchi K."/>
            <person name="Semple C.A."/>
            <person name="Seno S."/>
            <person name="Sessa L."/>
            <person name="Sheng Y."/>
            <person name="Shibata Y."/>
            <person name="Shimada H."/>
            <person name="Shimada K."/>
            <person name="Silva D."/>
            <person name="Sinclair B."/>
            <person name="Sperling S."/>
            <person name="Stupka E."/>
            <person name="Sugiura K."/>
            <person name="Sultana R."/>
            <person name="Takenaka Y."/>
            <person name="Taki K."/>
            <person name="Tammoja K."/>
            <person name="Tan S.L."/>
            <person name="Tang S."/>
            <person name="Taylor M.S."/>
            <person name="Tegner J."/>
            <person name="Teichmann S.A."/>
            <person name="Ueda H.R."/>
            <person name="van Nimwegen E."/>
            <person name="Verardo R."/>
            <person name="Wei C.L."/>
            <person name="Yagi K."/>
            <person name="Yamanishi H."/>
            <person name="Zabarovsky E."/>
            <person name="Zhu S."/>
            <person name="Zimmer A."/>
            <person name="Hide W."/>
            <person name="Bult C."/>
            <person name="Grimmond S.M."/>
            <person name="Teasdale R.D."/>
            <person name="Liu E.T."/>
            <person name="Brusic V."/>
            <person name="Quackenbush J."/>
            <person name="Wahlestedt C."/>
            <person name="Mattick J.S."/>
            <person name="Hume D.A."/>
            <person name="Kai C."/>
            <person name="Sasaki D."/>
            <person name="Tomaru Y."/>
            <person name="Fukuda S."/>
            <person name="Kanamori-Katayama M."/>
            <person name="Suzuki M."/>
            <person name="Aoki J."/>
            <person name="Arakawa T."/>
            <person name="Iida J."/>
            <person name="Imamura K."/>
            <person name="Itoh M."/>
            <person name="Kato T."/>
            <person name="Kawaji H."/>
            <person name="Kawagashira N."/>
            <person name="Kawashima T."/>
            <person name="Kojima M."/>
            <person name="Kondo S."/>
            <person name="Konno H."/>
            <person name="Nakano K."/>
            <person name="Ninomiya N."/>
            <person name="Nishio T."/>
            <person name="Okada M."/>
            <person name="Plessy C."/>
            <person name="Shibata K."/>
            <person name="Shiraki T."/>
            <person name="Suzuki S."/>
            <person name="Tagami M."/>
            <person name="Waki K."/>
            <person name="Watahiki A."/>
            <person name="Okamura-Oho Y."/>
            <person name="Suzuki H."/>
            <person name="Kawai J."/>
            <person name="Hayashizaki Y."/>
        </authorList>
    </citation>
    <scope>NUCLEOTIDE SEQUENCE [LARGE SCALE MRNA] (ISOFORMS 1 AND 2)</scope>
    <source>
        <strain>C57BL/6J</strain>
        <tissue>Embryo</tissue>
        <tissue>Kidney</tissue>
    </source>
</reference>
<reference key="2">
    <citation type="journal article" date="2009" name="PLoS Biol.">
        <title>Lineage-specific biology revealed by a finished genome assembly of the mouse.</title>
        <authorList>
            <person name="Church D.M."/>
            <person name="Goodstadt L."/>
            <person name="Hillier L.W."/>
            <person name="Zody M.C."/>
            <person name="Goldstein S."/>
            <person name="She X."/>
            <person name="Bult C.J."/>
            <person name="Agarwala R."/>
            <person name="Cherry J.L."/>
            <person name="DiCuccio M."/>
            <person name="Hlavina W."/>
            <person name="Kapustin Y."/>
            <person name="Meric P."/>
            <person name="Maglott D."/>
            <person name="Birtle Z."/>
            <person name="Marques A.C."/>
            <person name="Graves T."/>
            <person name="Zhou S."/>
            <person name="Teague B."/>
            <person name="Potamousis K."/>
            <person name="Churas C."/>
            <person name="Place M."/>
            <person name="Herschleb J."/>
            <person name="Runnheim R."/>
            <person name="Forrest D."/>
            <person name="Amos-Landgraf J."/>
            <person name="Schwartz D.C."/>
            <person name="Cheng Z."/>
            <person name="Lindblad-Toh K."/>
            <person name="Eichler E.E."/>
            <person name="Ponting C.P."/>
        </authorList>
    </citation>
    <scope>NUCLEOTIDE SEQUENCE [LARGE SCALE GENOMIC DNA]</scope>
    <source>
        <strain>C57BL/6J</strain>
    </source>
</reference>
<reference key="3">
    <citation type="submission" date="2005-07" db="EMBL/GenBank/DDBJ databases">
        <authorList>
            <person name="Mural R.J."/>
            <person name="Adams M.D."/>
            <person name="Myers E.W."/>
            <person name="Smith H.O."/>
            <person name="Venter J.C."/>
        </authorList>
    </citation>
    <scope>NUCLEOTIDE SEQUENCE [LARGE SCALE GENOMIC DNA]</scope>
</reference>
<reference key="4">
    <citation type="journal article" date="2004" name="Genome Res.">
        <title>The status, quality, and expansion of the NIH full-length cDNA project: the Mammalian Gene Collection (MGC).</title>
        <authorList>
            <consortium name="The MGC Project Team"/>
        </authorList>
    </citation>
    <scope>NUCLEOTIDE SEQUENCE [LARGE SCALE MRNA] OF 61-228 (ISOFORM 1)</scope>
    <source>
        <strain>C57BL/6J</strain>
        <strain>FVB/N</strain>
        <tissue>Mammary gland</tissue>
    </source>
</reference>
<reference key="5">
    <citation type="journal article" date="2010" name="Cell">
        <title>A tissue-specific atlas of mouse protein phosphorylation and expression.</title>
        <authorList>
            <person name="Huttlin E.L."/>
            <person name="Jedrychowski M.P."/>
            <person name="Elias J.E."/>
            <person name="Goswami T."/>
            <person name="Rad R."/>
            <person name="Beausoleil S.A."/>
            <person name="Villen J."/>
            <person name="Haas W."/>
            <person name="Sowa M.E."/>
            <person name="Gygi S.P."/>
        </authorList>
    </citation>
    <scope>IDENTIFICATION BY MASS SPECTROMETRY [LARGE SCALE ANALYSIS]</scope>
    <source>
        <tissue>Liver</tissue>
        <tissue>Testis</tissue>
    </source>
</reference>
<dbReference type="EMBL" id="AK002812">
    <property type="protein sequence ID" value="BAB22377.2"/>
    <property type="molecule type" value="mRNA"/>
</dbReference>
<dbReference type="EMBL" id="AK004267">
    <property type="protein sequence ID" value="BAB23242.2"/>
    <property type="molecule type" value="mRNA"/>
</dbReference>
<dbReference type="EMBL" id="AL935326">
    <property type="status" value="NOT_ANNOTATED_CDS"/>
    <property type="molecule type" value="Genomic_DNA"/>
</dbReference>
<dbReference type="EMBL" id="CH466519">
    <property type="protein sequence ID" value="EDL26959.1"/>
    <property type="molecule type" value="Genomic_DNA"/>
</dbReference>
<dbReference type="EMBL" id="CH466519">
    <property type="protein sequence ID" value="EDL26960.1"/>
    <property type="molecule type" value="Genomic_DNA"/>
</dbReference>
<dbReference type="EMBL" id="BC005501">
    <property type="protein sequence ID" value="AAH05501.1"/>
    <property type="molecule type" value="mRNA"/>
</dbReference>
<dbReference type="CCDS" id="CCDS16058.1">
    <molecule id="Q9DCG2-2"/>
</dbReference>
<dbReference type="CCDS" id="CCDS71058.1">
    <molecule id="Q9DCG2-1"/>
</dbReference>
<dbReference type="RefSeq" id="NP_001277589.1">
    <molecule id="Q9DCG2-1"/>
    <property type="nucleotide sequence ID" value="NM_001290660.1"/>
</dbReference>
<dbReference type="RefSeq" id="NP_079698.2">
    <molecule id="Q9DCG2-2"/>
    <property type="nucleotide sequence ID" value="NM_025422.4"/>
</dbReference>
<dbReference type="SMR" id="Q9DCG2"/>
<dbReference type="FunCoup" id="Q9DCG2">
    <property type="interactions" value="35"/>
</dbReference>
<dbReference type="STRING" id="10090.ENSMUSP00000074188"/>
<dbReference type="GlyCosmos" id="Q9DCG2">
    <property type="glycosylation" value="1 site, No reported glycans"/>
</dbReference>
<dbReference type="GlyGen" id="Q9DCG2">
    <property type="glycosylation" value="1 site, 1 N-linked glycan (1 site)"/>
</dbReference>
<dbReference type="PhosphoSitePlus" id="Q9DCG2"/>
<dbReference type="SwissPalm" id="Q9DCG2"/>
<dbReference type="jPOST" id="Q9DCG2"/>
<dbReference type="PaxDb" id="10090-ENSMUSP00000028356"/>
<dbReference type="PeptideAtlas" id="Q9DCG2"/>
<dbReference type="ProteomicsDB" id="279963">
    <molecule id="Q9DCG2-1"/>
</dbReference>
<dbReference type="ProteomicsDB" id="279964">
    <molecule id="Q9DCG2-2"/>
</dbReference>
<dbReference type="Pumba" id="Q9DCG2"/>
<dbReference type="Antibodypedia" id="47602">
    <property type="antibodies" value="237 antibodies from 28 providers"/>
</dbReference>
<dbReference type="DNASU" id="66205"/>
<dbReference type="Ensembl" id="ENSMUST00000028356.9">
    <molecule id="Q9DCG2-2"/>
    <property type="protein sequence ID" value="ENSMUSP00000028356.9"/>
    <property type="gene ID" value="ENSMUSG00000060703.13"/>
</dbReference>
<dbReference type="Ensembl" id="ENSMUST00000074606.11">
    <molecule id="Q9DCG2-1"/>
    <property type="protein sequence ID" value="ENSMUSP00000074188.5"/>
    <property type="gene ID" value="ENSMUSG00000060703.13"/>
</dbReference>
<dbReference type="GeneID" id="66205"/>
<dbReference type="KEGG" id="mmu:66205"/>
<dbReference type="UCSC" id="uc008jub.2">
    <molecule id="Q9DCG2-2"/>
    <property type="organism name" value="mouse"/>
</dbReference>
<dbReference type="UCSC" id="uc008juc.2">
    <molecule id="Q9DCG2-1"/>
    <property type="organism name" value="mouse"/>
</dbReference>
<dbReference type="AGR" id="MGI:1913455"/>
<dbReference type="CTD" id="9936"/>
<dbReference type="MGI" id="MGI:1913455">
    <property type="gene designation" value="Cd302"/>
</dbReference>
<dbReference type="VEuPathDB" id="HostDB:ENSMUSG00000060703"/>
<dbReference type="eggNOG" id="KOG4297">
    <property type="taxonomic scope" value="Eukaryota"/>
</dbReference>
<dbReference type="GeneTree" id="ENSGT01050000244842"/>
<dbReference type="HOGENOM" id="CLU_088281_0_0_1"/>
<dbReference type="InParanoid" id="Q9DCG2"/>
<dbReference type="OMA" id="RWENVSC"/>
<dbReference type="OrthoDB" id="9945342at2759"/>
<dbReference type="PhylomeDB" id="Q9DCG2"/>
<dbReference type="BioGRID-ORCS" id="66205">
    <property type="hits" value="3 hits in 76 CRISPR screens"/>
</dbReference>
<dbReference type="ChiTaRS" id="Cd302">
    <property type="organism name" value="mouse"/>
</dbReference>
<dbReference type="PRO" id="PR:Q9DCG2"/>
<dbReference type="Proteomes" id="UP000000589">
    <property type="component" value="Chromosome 2"/>
</dbReference>
<dbReference type="RNAct" id="Q9DCG2">
    <property type="molecule type" value="protein"/>
</dbReference>
<dbReference type="Bgee" id="ENSMUSG00000060703">
    <property type="expression patterns" value="Expressed in left lobe of liver and 249 other cell types or tissues"/>
</dbReference>
<dbReference type="GO" id="GO:0005938">
    <property type="term" value="C:cell cortex"/>
    <property type="evidence" value="ECO:0000266"/>
    <property type="project" value="MGI"/>
</dbReference>
<dbReference type="GO" id="GO:0030175">
    <property type="term" value="C:filopodium"/>
    <property type="evidence" value="ECO:0000266"/>
    <property type="project" value="MGI"/>
</dbReference>
<dbReference type="GO" id="GO:0016020">
    <property type="term" value="C:membrane"/>
    <property type="evidence" value="ECO:0007669"/>
    <property type="project" value="UniProtKB-SubCell"/>
</dbReference>
<dbReference type="GO" id="GO:0005902">
    <property type="term" value="C:microvillus"/>
    <property type="evidence" value="ECO:0007669"/>
    <property type="project" value="UniProtKB-SubCell"/>
</dbReference>
<dbReference type="GO" id="GO:0030246">
    <property type="term" value="F:carbohydrate binding"/>
    <property type="evidence" value="ECO:0007669"/>
    <property type="project" value="UniProtKB-KW"/>
</dbReference>
<dbReference type="GO" id="GO:0006909">
    <property type="term" value="P:phagocytosis"/>
    <property type="evidence" value="ECO:0000266"/>
    <property type="project" value="MGI"/>
</dbReference>
<dbReference type="CDD" id="cd00037">
    <property type="entry name" value="CLECT"/>
    <property type="match status" value="1"/>
</dbReference>
<dbReference type="FunFam" id="3.10.100.10:FF:000082">
    <property type="entry name" value="CD302 antigen isoform X2"/>
    <property type="match status" value="1"/>
</dbReference>
<dbReference type="Gene3D" id="3.10.100.10">
    <property type="entry name" value="Mannose-Binding Protein A, subunit A"/>
    <property type="match status" value="1"/>
</dbReference>
<dbReference type="InterPro" id="IPR001304">
    <property type="entry name" value="C-type_lectin-like"/>
</dbReference>
<dbReference type="InterPro" id="IPR016186">
    <property type="entry name" value="C-type_lectin-like/link_sf"/>
</dbReference>
<dbReference type="InterPro" id="IPR050111">
    <property type="entry name" value="C-type_lectin/snaclec_domain"/>
</dbReference>
<dbReference type="InterPro" id="IPR016187">
    <property type="entry name" value="CTDL_fold"/>
</dbReference>
<dbReference type="PANTHER" id="PTHR22803">
    <property type="entry name" value="MANNOSE, PHOSPHOLIPASE, LECTIN RECEPTOR RELATED"/>
    <property type="match status" value="1"/>
</dbReference>
<dbReference type="Pfam" id="PF00059">
    <property type="entry name" value="Lectin_C"/>
    <property type="match status" value="1"/>
</dbReference>
<dbReference type="SMART" id="SM00034">
    <property type="entry name" value="CLECT"/>
    <property type="match status" value="1"/>
</dbReference>
<dbReference type="SUPFAM" id="SSF56436">
    <property type="entry name" value="C-type lectin-like"/>
    <property type="match status" value="1"/>
</dbReference>
<dbReference type="PROSITE" id="PS50041">
    <property type="entry name" value="C_TYPE_LECTIN_2"/>
    <property type="match status" value="1"/>
</dbReference>
<protein>
    <recommendedName>
        <fullName>CD302 antigen</fullName>
    </recommendedName>
    <alternativeName>
        <fullName>C-type lectin domain family 13 member A</fullName>
    </alternativeName>
    <alternativeName>
        <fullName>Type I transmembrane C-type lectin receptor DCL-1</fullName>
    </alternativeName>
    <cdAntigenName>CD302</cdAntigenName>
</protein>
<sequence length="228" mass="25423">MPHAALSSLVLLSLATAIVADCPSSTWVQFQGSCYAFLQVTINVENIEDVRKQCTDHGADMVSIHNEEENAFILDTLQKRWKGPDDLLLGMFYDTDDATFKWYDHSNMTFDKWADQDGEDLVDTCGFLYTKTGEWRKGDCEISSVEGTLCKAAIPYDKKYLSDNHILISTLVIASTVTLAVLGAIIWFLYRRNARSGFTSFSPAPLSPYSDGCALVVAEEDEYAVQLD</sequence>
<keyword id="KW-0025">Alternative splicing</keyword>
<keyword id="KW-0966">Cell projection</keyword>
<keyword id="KW-0963">Cytoplasm</keyword>
<keyword id="KW-1015">Disulfide bond</keyword>
<keyword id="KW-0325">Glycoprotein</keyword>
<keyword id="KW-0430">Lectin</keyword>
<keyword id="KW-0472">Membrane</keyword>
<keyword id="KW-0675">Receptor</keyword>
<keyword id="KW-1185">Reference proteome</keyword>
<keyword id="KW-0732">Signal</keyword>
<keyword id="KW-0812">Transmembrane</keyword>
<keyword id="KW-1133">Transmembrane helix</keyword>